<keyword id="KW-0963">Cytoplasm</keyword>
<keyword id="KW-0324">Glycolysis</keyword>
<keyword id="KW-0520">NAD</keyword>
<keyword id="KW-0560">Oxidoreductase</keyword>
<dbReference type="EC" id="1.2.1.12"/>
<dbReference type="EMBL" id="X58718">
    <property type="protein sequence ID" value="CAA41554.1"/>
    <property type="molecule type" value="Genomic_DNA"/>
</dbReference>
<dbReference type="PIR" id="S17981">
    <property type="entry name" value="DEYDGC"/>
</dbReference>
<dbReference type="SMR" id="P28844"/>
<dbReference type="UniPathway" id="UPA00109">
    <property type="reaction ID" value="UER00184"/>
</dbReference>
<dbReference type="GO" id="GO:0005829">
    <property type="term" value="C:cytosol"/>
    <property type="evidence" value="ECO:0007669"/>
    <property type="project" value="TreeGrafter"/>
</dbReference>
<dbReference type="GO" id="GO:0004365">
    <property type="term" value="F:glyceraldehyde-3-phosphate dehydrogenase (NAD+) (phosphorylating) activity"/>
    <property type="evidence" value="ECO:0007669"/>
    <property type="project" value="UniProtKB-EC"/>
</dbReference>
<dbReference type="GO" id="GO:0051287">
    <property type="term" value="F:NAD binding"/>
    <property type="evidence" value="ECO:0007669"/>
    <property type="project" value="InterPro"/>
</dbReference>
<dbReference type="GO" id="GO:0050661">
    <property type="term" value="F:NADP binding"/>
    <property type="evidence" value="ECO:0007669"/>
    <property type="project" value="InterPro"/>
</dbReference>
<dbReference type="GO" id="GO:0006006">
    <property type="term" value="P:glucose metabolic process"/>
    <property type="evidence" value="ECO:0007669"/>
    <property type="project" value="InterPro"/>
</dbReference>
<dbReference type="GO" id="GO:0006096">
    <property type="term" value="P:glycolytic process"/>
    <property type="evidence" value="ECO:0007669"/>
    <property type="project" value="UniProtKB-UniPathway"/>
</dbReference>
<dbReference type="CDD" id="cd18126">
    <property type="entry name" value="GAPDH_I_C"/>
    <property type="match status" value="1"/>
</dbReference>
<dbReference type="CDD" id="cd05214">
    <property type="entry name" value="GAPDH_I_N"/>
    <property type="match status" value="1"/>
</dbReference>
<dbReference type="FunFam" id="3.30.360.10:FF:000001">
    <property type="entry name" value="Glyceraldehyde-3-phosphate dehydrogenase"/>
    <property type="match status" value="1"/>
</dbReference>
<dbReference type="FunFam" id="3.40.50.720:FF:000020">
    <property type="entry name" value="Glyceraldehyde-3-phosphate dehydrogenase"/>
    <property type="match status" value="1"/>
</dbReference>
<dbReference type="Gene3D" id="3.30.360.10">
    <property type="entry name" value="Dihydrodipicolinate Reductase, domain 2"/>
    <property type="match status" value="1"/>
</dbReference>
<dbReference type="Gene3D" id="3.40.50.720">
    <property type="entry name" value="NAD(P)-binding Rossmann-like Domain"/>
    <property type="match status" value="1"/>
</dbReference>
<dbReference type="InterPro" id="IPR020831">
    <property type="entry name" value="GlycerAld/Erythrose_P_DH"/>
</dbReference>
<dbReference type="InterPro" id="IPR020830">
    <property type="entry name" value="GlycerAld_3-P_DH_AS"/>
</dbReference>
<dbReference type="InterPro" id="IPR020829">
    <property type="entry name" value="GlycerAld_3-P_DH_cat"/>
</dbReference>
<dbReference type="InterPro" id="IPR020828">
    <property type="entry name" value="GlycerAld_3-P_DH_NAD(P)-bd"/>
</dbReference>
<dbReference type="InterPro" id="IPR006424">
    <property type="entry name" value="Glyceraldehyde-3-P_DH_1"/>
</dbReference>
<dbReference type="InterPro" id="IPR036291">
    <property type="entry name" value="NAD(P)-bd_dom_sf"/>
</dbReference>
<dbReference type="NCBIfam" id="TIGR01534">
    <property type="entry name" value="GAPDH-I"/>
    <property type="match status" value="1"/>
</dbReference>
<dbReference type="PANTHER" id="PTHR10836">
    <property type="entry name" value="GLYCERALDEHYDE 3-PHOSPHATE DEHYDROGENASE"/>
    <property type="match status" value="1"/>
</dbReference>
<dbReference type="PANTHER" id="PTHR10836:SF76">
    <property type="entry name" value="GLYCERALDEHYDE-3-PHOSPHATE DEHYDROGENASE-RELATED"/>
    <property type="match status" value="1"/>
</dbReference>
<dbReference type="Pfam" id="PF02800">
    <property type="entry name" value="Gp_dh_C"/>
    <property type="match status" value="1"/>
</dbReference>
<dbReference type="Pfam" id="PF00044">
    <property type="entry name" value="Gp_dh_N"/>
    <property type="match status" value="1"/>
</dbReference>
<dbReference type="PIRSF" id="PIRSF000149">
    <property type="entry name" value="GAP_DH"/>
    <property type="match status" value="1"/>
</dbReference>
<dbReference type="PRINTS" id="PR00078">
    <property type="entry name" value="G3PDHDRGNASE"/>
</dbReference>
<dbReference type="SMART" id="SM00846">
    <property type="entry name" value="Gp_dh_N"/>
    <property type="match status" value="1"/>
</dbReference>
<dbReference type="SUPFAM" id="SSF55347">
    <property type="entry name" value="Glyceraldehyde-3-phosphate dehydrogenase-like, C-terminal domain"/>
    <property type="match status" value="1"/>
</dbReference>
<dbReference type="SUPFAM" id="SSF51735">
    <property type="entry name" value="NAD(P)-binding Rossmann-fold domains"/>
    <property type="match status" value="1"/>
</dbReference>
<dbReference type="PROSITE" id="PS00071">
    <property type="entry name" value="GAPDH"/>
    <property type="match status" value="1"/>
</dbReference>
<feature type="chain" id="PRO_0000145552" description="Glyceraldehyde-3-phosphate dehydrogenase">
    <location>
        <begin position="1"/>
        <end position="337"/>
    </location>
</feature>
<feature type="active site" description="Nucleophile" evidence="2">
    <location>
        <position position="151"/>
    </location>
</feature>
<feature type="binding site" evidence="1">
    <location>
        <begin position="12"/>
        <end position="13"/>
    </location>
    <ligand>
        <name>NAD(+)</name>
        <dbReference type="ChEBI" id="CHEBI:57540"/>
    </ligand>
</feature>
<feature type="binding site" evidence="1">
    <location>
        <position position="34"/>
    </location>
    <ligand>
        <name>NAD(+)</name>
        <dbReference type="ChEBI" id="CHEBI:57540"/>
    </ligand>
</feature>
<feature type="binding site" evidence="1">
    <location>
        <position position="79"/>
    </location>
    <ligand>
        <name>NAD(+)</name>
        <dbReference type="ChEBI" id="CHEBI:57540"/>
    </ligand>
</feature>
<feature type="binding site" evidence="1">
    <location>
        <begin position="150"/>
        <end position="152"/>
    </location>
    <ligand>
        <name>D-glyceraldehyde 3-phosphate</name>
        <dbReference type="ChEBI" id="CHEBI:59776"/>
    </ligand>
</feature>
<feature type="binding site" evidence="1">
    <location>
        <position position="181"/>
    </location>
    <ligand>
        <name>D-glyceraldehyde 3-phosphate</name>
        <dbReference type="ChEBI" id="CHEBI:59776"/>
    </ligand>
</feature>
<feature type="binding site" evidence="1">
    <location>
        <begin position="210"/>
        <end position="211"/>
    </location>
    <ligand>
        <name>D-glyceraldehyde 3-phosphate</name>
        <dbReference type="ChEBI" id="CHEBI:59776"/>
    </ligand>
</feature>
<feature type="binding site" evidence="1">
    <location>
        <position position="233"/>
    </location>
    <ligand>
        <name>D-glyceraldehyde 3-phosphate</name>
        <dbReference type="ChEBI" id="CHEBI:59776"/>
    </ligand>
</feature>
<feature type="binding site" evidence="1">
    <location>
        <position position="315"/>
    </location>
    <ligand>
        <name>NAD(+)</name>
        <dbReference type="ChEBI" id="CHEBI:57540"/>
    </ligand>
</feature>
<feature type="site" description="Activates thiol group during catalysis" evidence="1">
    <location>
        <position position="178"/>
    </location>
</feature>
<accession>P28844</accession>
<reference key="1">
    <citation type="journal article" date="1991" name="Curr. Genet.">
        <title>Genome analysis of imperfect fungi: electrophoretic karyotyping and characterization of the nuclear gene coding for glyceraldehyde-3-phosphate dehydrogenase (gpd) of Curvularia lunata.</title>
        <authorList>
            <person name="Osiewacz H.D."/>
            <person name="Ridder R."/>
        </authorList>
    </citation>
    <scope>NUCLEOTIDE SEQUENCE [GENOMIC DNA]</scope>
    <source>
        <strain>AT46</strain>
    </source>
</reference>
<comment type="catalytic activity">
    <reaction evidence="2">
        <text>D-glyceraldehyde 3-phosphate + phosphate + NAD(+) = (2R)-3-phospho-glyceroyl phosphate + NADH + H(+)</text>
        <dbReference type="Rhea" id="RHEA:10300"/>
        <dbReference type="ChEBI" id="CHEBI:15378"/>
        <dbReference type="ChEBI" id="CHEBI:43474"/>
        <dbReference type="ChEBI" id="CHEBI:57540"/>
        <dbReference type="ChEBI" id="CHEBI:57604"/>
        <dbReference type="ChEBI" id="CHEBI:57945"/>
        <dbReference type="ChEBI" id="CHEBI:59776"/>
        <dbReference type="EC" id="1.2.1.12"/>
    </reaction>
</comment>
<comment type="pathway">
    <text>Carbohydrate degradation; glycolysis; pyruvate from D-glyceraldehyde 3-phosphate: step 1/5.</text>
</comment>
<comment type="subunit">
    <text>Homotetramer.</text>
</comment>
<comment type="subcellular location">
    <subcellularLocation>
        <location>Cytoplasm</location>
    </subcellularLocation>
</comment>
<comment type="similarity">
    <text evidence="3">Belongs to the glyceraldehyde-3-phosphate dehydrogenase family.</text>
</comment>
<gene>
    <name type="primary">GPD</name>
</gene>
<evidence type="ECO:0000250" key="1"/>
<evidence type="ECO:0000255" key="2">
    <source>
        <dbReference type="PROSITE-ProRule" id="PRU10009"/>
    </source>
</evidence>
<evidence type="ECO:0000305" key="3"/>
<proteinExistence type="inferred from homology"/>
<name>G3P_COCLU</name>
<sequence>MVVKVGINGFGRIGRIVFRNAIEHNDVEIVAVNDPFIEPHYAAYMLKYDSTHGQFKGDIKVDGNNLTVNGKTVRFHMEKDPANIPWSETGAYYVVESTGVFTTTEKAKAHLKGGAKKVVISAPSADAPMFVMGVNHETYKSDIEVLSNSSCTTNCLAPLAKVIHDKYTIIEGLMTTIHSYTATQKVVDGPSAKDWRGGRTAAQNIIPSSTGAAKAVGKVIPELNGKLTGMAMRVPTANVSVVDLTVRIEKGASYDEIKQAVKEASEGPLSGILGYTEDDIVTTDLNGDNRSSIFDAKAGISLNKNFVKLVSWYDNEWGYSRRVLDLLVYIAKIDGNA</sequence>
<protein>
    <recommendedName>
        <fullName>Glyceraldehyde-3-phosphate dehydrogenase</fullName>
        <shortName>GAPDH</shortName>
        <ecNumber>1.2.1.12</ecNumber>
    </recommendedName>
</protein>
<organism>
    <name type="scientific">Cochliobolus lunatus</name>
    <name type="common">Filamentous fungus</name>
    <name type="synonym">Curvularia lunata</name>
    <dbReference type="NCBI Taxonomy" id="5503"/>
    <lineage>
        <taxon>Eukaryota</taxon>
        <taxon>Fungi</taxon>
        <taxon>Dikarya</taxon>
        <taxon>Ascomycota</taxon>
        <taxon>Pezizomycotina</taxon>
        <taxon>Dothideomycetes</taxon>
        <taxon>Pleosporomycetidae</taxon>
        <taxon>Pleosporales</taxon>
        <taxon>Pleosporineae</taxon>
        <taxon>Pleosporaceae</taxon>
        <taxon>Curvularia</taxon>
    </lineage>
</organism>